<comment type="function">
    <text evidence="1">Catalyzes the acyloin condensation reaction between C atoms 2 and 3 of pyruvate and glyceraldehyde 3-phosphate to yield 1-deoxy-D-xylulose-5-phosphate (DXP).</text>
</comment>
<comment type="catalytic activity">
    <reaction evidence="1">
        <text>D-glyceraldehyde 3-phosphate + pyruvate + H(+) = 1-deoxy-D-xylulose 5-phosphate + CO2</text>
        <dbReference type="Rhea" id="RHEA:12605"/>
        <dbReference type="ChEBI" id="CHEBI:15361"/>
        <dbReference type="ChEBI" id="CHEBI:15378"/>
        <dbReference type="ChEBI" id="CHEBI:16526"/>
        <dbReference type="ChEBI" id="CHEBI:57792"/>
        <dbReference type="ChEBI" id="CHEBI:59776"/>
        <dbReference type="EC" id="2.2.1.7"/>
    </reaction>
</comment>
<comment type="cofactor">
    <cofactor evidence="1">
        <name>Mg(2+)</name>
        <dbReference type="ChEBI" id="CHEBI:18420"/>
    </cofactor>
    <text evidence="1">Binds 1 Mg(2+) ion per subunit.</text>
</comment>
<comment type="cofactor">
    <cofactor evidence="1">
        <name>thiamine diphosphate</name>
        <dbReference type="ChEBI" id="CHEBI:58937"/>
    </cofactor>
    <text evidence="1">Binds 1 thiamine pyrophosphate per subunit.</text>
</comment>
<comment type="pathway">
    <text evidence="1">Metabolic intermediate biosynthesis; 1-deoxy-D-xylulose 5-phosphate biosynthesis; 1-deoxy-D-xylulose 5-phosphate from D-glyceraldehyde 3-phosphate and pyruvate: step 1/1.</text>
</comment>
<comment type="subunit">
    <text evidence="1">Homodimer.</text>
</comment>
<comment type="similarity">
    <text evidence="1">Belongs to the transketolase family. DXPS subfamily.</text>
</comment>
<reference key="1">
    <citation type="journal article" date="2010" name="Genome Biol. Evol.">
        <title>Continuing evolution of Burkholderia mallei through genome reduction and large-scale rearrangements.</title>
        <authorList>
            <person name="Losada L."/>
            <person name="Ronning C.M."/>
            <person name="DeShazer D."/>
            <person name="Woods D."/>
            <person name="Fedorova N."/>
            <person name="Kim H.S."/>
            <person name="Shabalina S.A."/>
            <person name="Pearson T.R."/>
            <person name="Brinkac L."/>
            <person name="Tan P."/>
            <person name="Nandi T."/>
            <person name="Crabtree J."/>
            <person name="Badger J."/>
            <person name="Beckstrom-Sternberg S."/>
            <person name="Saqib M."/>
            <person name="Schutzer S.E."/>
            <person name="Keim P."/>
            <person name="Nierman W.C."/>
        </authorList>
    </citation>
    <scope>NUCLEOTIDE SEQUENCE [LARGE SCALE GENOMIC DNA]</scope>
    <source>
        <strain>1106a</strain>
    </source>
</reference>
<sequence>MYDLLKTIDDPADLRRLDRRQLQPLADELRAFVLDSVSKTGGHLSSNLGTVELTIALHYVFNTPDDRIVWDVGHQTYPHKILTGRRDGMKTLRQFDGISGFPRRSESEYDTFGTAHSSTSISAALGMAIGSKLNGDDRFSIAVIGDGAMTAGMAFEAMNNAGVSEDAKLLVILNDNDMSISPPVGALNRHLARLMSGRFYAAARAGVERVLSVAPPVLELARKLEEHAKGMVVPATLFEEFGFNYIGPIDGHDLDSLIPTLQNIKELRGPQFLHVVTKKGQGYKLAEADPVLYHGPGKFNPAEGIKPSTTPAKKTYTQVFGEWLCDAAELDARVVGITPAMREGSGMVEFEKRFPERYYDVGIAEQHAVTFAGGLATEGLKPVVAIYSTFLQRAYDQLIHDVALQNLPVVFAIDRAGLVGADGATHAGAYDLAFLRCIPNMTVMAASDENECRQMLHTALQQPNPTAVRYPRGAGTGVATVKAFTEIPLGKGEVRRRTSQPDGKRIAILAFGTMVAPSLAAADALDATVANMRFVKPIDAELVQALARTHDYLVTVEEGCVMGGAGSACVEAMMESGAVRPVLQLGLPDRFVDHGDPAKLLSLCGLDGDGIAKSIRERFLSHAADVASPAKRVA</sequence>
<gene>
    <name evidence="1" type="primary">dxs</name>
    <name type="ordered locus">BURPS1106A_A2392</name>
</gene>
<accession>A3P7W4</accession>
<protein>
    <recommendedName>
        <fullName evidence="1">1-deoxy-D-xylulose-5-phosphate synthase</fullName>
        <ecNumber evidence="1">2.2.1.7</ecNumber>
    </recommendedName>
    <alternativeName>
        <fullName evidence="1">1-deoxyxylulose-5-phosphate synthase</fullName>
        <shortName evidence="1">DXP synthase</shortName>
        <shortName evidence="1">DXPS</shortName>
    </alternativeName>
</protein>
<name>DXS_BURP0</name>
<evidence type="ECO:0000255" key="1">
    <source>
        <dbReference type="HAMAP-Rule" id="MF_00315"/>
    </source>
</evidence>
<feature type="chain" id="PRO_1000019012" description="1-deoxy-D-xylulose-5-phosphate synthase">
    <location>
        <begin position="1"/>
        <end position="634"/>
    </location>
</feature>
<feature type="binding site" evidence="1">
    <location>
        <position position="74"/>
    </location>
    <ligand>
        <name>thiamine diphosphate</name>
        <dbReference type="ChEBI" id="CHEBI:58937"/>
    </ligand>
</feature>
<feature type="binding site" evidence="1">
    <location>
        <begin position="115"/>
        <end position="117"/>
    </location>
    <ligand>
        <name>thiamine diphosphate</name>
        <dbReference type="ChEBI" id="CHEBI:58937"/>
    </ligand>
</feature>
<feature type="binding site" evidence="1">
    <location>
        <position position="146"/>
    </location>
    <ligand>
        <name>Mg(2+)</name>
        <dbReference type="ChEBI" id="CHEBI:18420"/>
    </ligand>
</feature>
<feature type="binding site" evidence="1">
    <location>
        <begin position="147"/>
        <end position="148"/>
    </location>
    <ligand>
        <name>thiamine diphosphate</name>
        <dbReference type="ChEBI" id="CHEBI:58937"/>
    </ligand>
</feature>
<feature type="binding site" evidence="1">
    <location>
        <position position="176"/>
    </location>
    <ligand>
        <name>Mg(2+)</name>
        <dbReference type="ChEBI" id="CHEBI:18420"/>
    </ligand>
</feature>
<feature type="binding site" evidence="1">
    <location>
        <position position="176"/>
    </location>
    <ligand>
        <name>thiamine diphosphate</name>
        <dbReference type="ChEBI" id="CHEBI:58937"/>
    </ligand>
</feature>
<feature type="binding site" evidence="1">
    <location>
        <position position="283"/>
    </location>
    <ligand>
        <name>thiamine diphosphate</name>
        <dbReference type="ChEBI" id="CHEBI:58937"/>
    </ligand>
</feature>
<feature type="binding site" evidence="1">
    <location>
        <position position="365"/>
    </location>
    <ligand>
        <name>thiamine diphosphate</name>
        <dbReference type="ChEBI" id="CHEBI:58937"/>
    </ligand>
</feature>
<keyword id="KW-0414">Isoprene biosynthesis</keyword>
<keyword id="KW-0460">Magnesium</keyword>
<keyword id="KW-0479">Metal-binding</keyword>
<keyword id="KW-0784">Thiamine biosynthesis</keyword>
<keyword id="KW-0786">Thiamine pyrophosphate</keyword>
<keyword id="KW-0808">Transferase</keyword>
<organism>
    <name type="scientific">Burkholderia pseudomallei (strain 1106a)</name>
    <dbReference type="NCBI Taxonomy" id="357348"/>
    <lineage>
        <taxon>Bacteria</taxon>
        <taxon>Pseudomonadati</taxon>
        <taxon>Pseudomonadota</taxon>
        <taxon>Betaproteobacteria</taxon>
        <taxon>Burkholderiales</taxon>
        <taxon>Burkholderiaceae</taxon>
        <taxon>Burkholderia</taxon>
        <taxon>pseudomallei group</taxon>
    </lineage>
</organism>
<proteinExistence type="inferred from homology"/>
<dbReference type="EC" id="2.2.1.7" evidence="1"/>
<dbReference type="EMBL" id="CP000573">
    <property type="protein sequence ID" value="ABN93685.1"/>
    <property type="molecule type" value="Genomic_DNA"/>
</dbReference>
<dbReference type="RefSeq" id="WP_004266656.1">
    <property type="nucleotide sequence ID" value="NC_009078.1"/>
</dbReference>
<dbReference type="SMR" id="A3P7W4"/>
<dbReference type="GeneID" id="93063969"/>
<dbReference type="KEGG" id="bpl:BURPS1106A_A2392"/>
<dbReference type="HOGENOM" id="CLU_009227_1_4_4"/>
<dbReference type="UniPathway" id="UPA00064">
    <property type="reaction ID" value="UER00091"/>
</dbReference>
<dbReference type="Proteomes" id="UP000006738">
    <property type="component" value="Chromosome II"/>
</dbReference>
<dbReference type="GO" id="GO:0005829">
    <property type="term" value="C:cytosol"/>
    <property type="evidence" value="ECO:0007669"/>
    <property type="project" value="TreeGrafter"/>
</dbReference>
<dbReference type="GO" id="GO:0008661">
    <property type="term" value="F:1-deoxy-D-xylulose-5-phosphate synthase activity"/>
    <property type="evidence" value="ECO:0007669"/>
    <property type="project" value="UniProtKB-UniRule"/>
</dbReference>
<dbReference type="GO" id="GO:0000287">
    <property type="term" value="F:magnesium ion binding"/>
    <property type="evidence" value="ECO:0007669"/>
    <property type="project" value="UniProtKB-UniRule"/>
</dbReference>
<dbReference type="GO" id="GO:0030976">
    <property type="term" value="F:thiamine pyrophosphate binding"/>
    <property type="evidence" value="ECO:0007669"/>
    <property type="project" value="UniProtKB-UniRule"/>
</dbReference>
<dbReference type="GO" id="GO:0052865">
    <property type="term" value="P:1-deoxy-D-xylulose 5-phosphate biosynthetic process"/>
    <property type="evidence" value="ECO:0007669"/>
    <property type="project" value="UniProtKB-UniPathway"/>
</dbReference>
<dbReference type="GO" id="GO:0019288">
    <property type="term" value="P:isopentenyl diphosphate biosynthetic process, methylerythritol 4-phosphate pathway"/>
    <property type="evidence" value="ECO:0007669"/>
    <property type="project" value="TreeGrafter"/>
</dbReference>
<dbReference type="GO" id="GO:0016114">
    <property type="term" value="P:terpenoid biosynthetic process"/>
    <property type="evidence" value="ECO:0007669"/>
    <property type="project" value="UniProtKB-UniRule"/>
</dbReference>
<dbReference type="GO" id="GO:0009228">
    <property type="term" value="P:thiamine biosynthetic process"/>
    <property type="evidence" value="ECO:0007669"/>
    <property type="project" value="UniProtKB-UniRule"/>
</dbReference>
<dbReference type="CDD" id="cd02007">
    <property type="entry name" value="TPP_DXS"/>
    <property type="match status" value="1"/>
</dbReference>
<dbReference type="CDD" id="cd07033">
    <property type="entry name" value="TPP_PYR_DXS_TK_like"/>
    <property type="match status" value="1"/>
</dbReference>
<dbReference type="FunFam" id="3.40.50.920:FF:000002">
    <property type="entry name" value="1-deoxy-D-xylulose-5-phosphate synthase"/>
    <property type="match status" value="1"/>
</dbReference>
<dbReference type="FunFam" id="3.40.50.970:FF:000005">
    <property type="entry name" value="1-deoxy-D-xylulose-5-phosphate synthase"/>
    <property type="match status" value="1"/>
</dbReference>
<dbReference type="Gene3D" id="3.40.50.920">
    <property type="match status" value="1"/>
</dbReference>
<dbReference type="Gene3D" id="3.40.50.970">
    <property type="match status" value="2"/>
</dbReference>
<dbReference type="HAMAP" id="MF_00315">
    <property type="entry name" value="DXP_synth"/>
    <property type="match status" value="1"/>
</dbReference>
<dbReference type="InterPro" id="IPR005477">
    <property type="entry name" value="Dxylulose-5-P_synthase"/>
</dbReference>
<dbReference type="InterPro" id="IPR029061">
    <property type="entry name" value="THDP-binding"/>
</dbReference>
<dbReference type="InterPro" id="IPR009014">
    <property type="entry name" value="Transketo_C/PFOR_II"/>
</dbReference>
<dbReference type="InterPro" id="IPR005475">
    <property type="entry name" value="Transketolase-like_Pyr-bd"/>
</dbReference>
<dbReference type="InterPro" id="IPR020826">
    <property type="entry name" value="Transketolase_BS"/>
</dbReference>
<dbReference type="InterPro" id="IPR033248">
    <property type="entry name" value="Transketolase_C"/>
</dbReference>
<dbReference type="InterPro" id="IPR049557">
    <property type="entry name" value="Transketolase_CS"/>
</dbReference>
<dbReference type="NCBIfam" id="TIGR00204">
    <property type="entry name" value="dxs"/>
    <property type="match status" value="1"/>
</dbReference>
<dbReference type="NCBIfam" id="NF003933">
    <property type="entry name" value="PRK05444.2-2"/>
    <property type="match status" value="1"/>
</dbReference>
<dbReference type="PANTHER" id="PTHR43322">
    <property type="entry name" value="1-D-DEOXYXYLULOSE 5-PHOSPHATE SYNTHASE-RELATED"/>
    <property type="match status" value="1"/>
</dbReference>
<dbReference type="PANTHER" id="PTHR43322:SF5">
    <property type="entry name" value="1-DEOXY-D-XYLULOSE-5-PHOSPHATE SYNTHASE, CHLOROPLASTIC"/>
    <property type="match status" value="1"/>
</dbReference>
<dbReference type="Pfam" id="PF13292">
    <property type="entry name" value="DXP_synthase_N"/>
    <property type="match status" value="1"/>
</dbReference>
<dbReference type="Pfam" id="PF02779">
    <property type="entry name" value="Transket_pyr"/>
    <property type="match status" value="1"/>
</dbReference>
<dbReference type="Pfam" id="PF02780">
    <property type="entry name" value="Transketolase_C"/>
    <property type="match status" value="1"/>
</dbReference>
<dbReference type="SMART" id="SM00861">
    <property type="entry name" value="Transket_pyr"/>
    <property type="match status" value="1"/>
</dbReference>
<dbReference type="SUPFAM" id="SSF52518">
    <property type="entry name" value="Thiamin diphosphate-binding fold (THDP-binding)"/>
    <property type="match status" value="2"/>
</dbReference>
<dbReference type="SUPFAM" id="SSF52922">
    <property type="entry name" value="TK C-terminal domain-like"/>
    <property type="match status" value="1"/>
</dbReference>
<dbReference type="PROSITE" id="PS00801">
    <property type="entry name" value="TRANSKETOLASE_1"/>
    <property type="match status" value="1"/>
</dbReference>
<dbReference type="PROSITE" id="PS00802">
    <property type="entry name" value="TRANSKETOLASE_2"/>
    <property type="match status" value="1"/>
</dbReference>